<dbReference type="EMBL" id="CP000667">
    <property type="protein sequence ID" value="ABP56349.1"/>
    <property type="molecule type" value="Genomic_DNA"/>
</dbReference>
<dbReference type="RefSeq" id="WP_012015121.1">
    <property type="nucleotide sequence ID" value="NC_009380.1"/>
</dbReference>
<dbReference type="SMR" id="A4XBP2"/>
<dbReference type="STRING" id="369723.Strop_3919"/>
<dbReference type="GeneID" id="93771423"/>
<dbReference type="KEGG" id="stp:Strop_3919"/>
<dbReference type="PATRIC" id="fig|391037.6.peg.4352"/>
<dbReference type="eggNOG" id="COG0185">
    <property type="taxonomic scope" value="Bacteria"/>
</dbReference>
<dbReference type="HOGENOM" id="CLU_144911_0_1_11"/>
<dbReference type="Proteomes" id="UP000000235">
    <property type="component" value="Chromosome"/>
</dbReference>
<dbReference type="GO" id="GO:0005737">
    <property type="term" value="C:cytoplasm"/>
    <property type="evidence" value="ECO:0007669"/>
    <property type="project" value="UniProtKB-ARBA"/>
</dbReference>
<dbReference type="GO" id="GO:0015935">
    <property type="term" value="C:small ribosomal subunit"/>
    <property type="evidence" value="ECO:0007669"/>
    <property type="project" value="InterPro"/>
</dbReference>
<dbReference type="GO" id="GO:0019843">
    <property type="term" value="F:rRNA binding"/>
    <property type="evidence" value="ECO:0007669"/>
    <property type="project" value="UniProtKB-UniRule"/>
</dbReference>
<dbReference type="GO" id="GO:0003735">
    <property type="term" value="F:structural constituent of ribosome"/>
    <property type="evidence" value="ECO:0007669"/>
    <property type="project" value="InterPro"/>
</dbReference>
<dbReference type="GO" id="GO:0000028">
    <property type="term" value="P:ribosomal small subunit assembly"/>
    <property type="evidence" value="ECO:0007669"/>
    <property type="project" value="TreeGrafter"/>
</dbReference>
<dbReference type="GO" id="GO:0006412">
    <property type="term" value="P:translation"/>
    <property type="evidence" value="ECO:0007669"/>
    <property type="project" value="UniProtKB-UniRule"/>
</dbReference>
<dbReference type="FunFam" id="3.30.860.10:FF:000001">
    <property type="entry name" value="30S ribosomal protein S19"/>
    <property type="match status" value="1"/>
</dbReference>
<dbReference type="Gene3D" id="3.30.860.10">
    <property type="entry name" value="30s Ribosomal Protein S19, Chain A"/>
    <property type="match status" value="1"/>
</dbReference>
<dbReference type="HAMAP" id="MF_00531">
    <property type="entry name" value="Ribosomal_uS19"/>
    <property type="match status" value="1"/>
</dbReference>
<dbReference type="InterPro" id="IPR002222">
    <property type="entry name" value="Ribosomal_uS19"/>
</dbReference>
<dbReference type="InterPro" id="IPR005732">
    <property type="entry name" value="Ribosomal_uS19_bac-type"/>
</dbReference>
<dbReference type="InterPro" id="IPR020934">
    <property type="entry name" value="Ribosomal_uS19_CS"/>
</dbReference>
<dbReference type="InterPro" id="IPR023575">
    <property type="entry name" value="Ribosomal_uS19_SF"/>
</dbReference>
<dbReference type="NCBIfam" id="TIGR01050">
    <property type="entry name" value="rpsS_bact"/>
    <property type="match status" value="1"/>
</dbReference>
<dbReference type="PANTHER" id="PTHR11880">
    <property type="entry name" value="RIBOSOMAL PROTEIN S19P FAMILY MEMBER"/>
    <property type="match status" value="1"/>
</dbReference>
<dbReference type="PANTHER" id="PTHR11880:SF8">
    <property type="entry name" value="SMALL RIBOSOMAL SUBUNIT PROTEIN US19M"/>
    <property type="match status" value="1"/>
</dbReference>
<dbReference type="Pfam" id="PF00203">
    <property type="entry name" value="Ribosomal_S19"/>
    <property type="match status" value="1"/>
</dbReference>
<dbReference type="PIRSF" id="PIRSF002144">
    <property type="entry name" value="Ribosomal_S19"/>
    <property type="match status" value="1"/>
</dbReference>
<dbReference type="PRINTS" id="PR00975">
    <property type="entry name" value="RIBOSOMALS19"/>
</dbReference>
<dbReference type="SUPFAM" id="SSF54570">
    <property type="entry name" value="Ribosomal protein S19"/>
    <property type="match status" value="1"/>
</dbReference>
<dbReference type="PROSITE" id="PS00323">
    <property type="entry name" value="RIBOSOMAL_S19"/>
    <property type="match status" value="1"/>
</dbReference>
<reference key="1">
    <citation type="journal article" date="2007" name="Proc. Natl. Acad. Sci. U.S.A.">
        <title>Genome sequencing reveals complex secondary metabolome in the marine actinomycete Salinispora tropica.</title>
        <authorList>
            <person name="Udwary D.W."/>
            <person name="Zeigler L."/>
            <person name="Asolkar R.N."/>
            <person name="Singan V."/>
            <person name="Lapidus A."/>
            <person name="Fenical W."/>
            <person name="Jensen P.R."/>
            <person name="Moore B.S."/>
        </authorList>
    </citation>
    <scope>NUCLEOTIDE SEQUENCE [LARGE SCALE GENOMIC DNA]</scope>
    <source>
        <strain>ATCC BAA-916 / DSM 44818 / JCM 13857 / NBRC 105044 / CNB-440</strain>
    </source>
</reference>
<sequence length="93" mass="10742">MPRSLKKGPFIDDHLLKKVETQNDKGTKNVIKTWSRRSTIIPEMLGHTIAVHDGRKHVPVFVTEAMVGHKLGEFALTRTFKGHEKDDRKSRRR</sequence>
<accession>A4XBP2</accession>
<name>RS19_SALTO</name>
<proteinExistence type="inferred from homology"/>
<comment type="function">
    <text evidence="1">Protein S19 forms a complex with S13 that binds strongly to the 16S ribosomal RNA.</text>
</comment>
<comment type="similarity">
    <text evidence="1">Belongs to the universal ribosomal protein uS19 family.</text>
</comment>
<feature type="chain" id="PRO_1000081792" description="Small ribosomal subunit protein uS19">
    <location>
        <begin position="1"/>
        <end position="93"/>
    </location>
</feature>
<protein>
    <recommendedName>
        <fullName evidence="1">Small ribosomal subunit protein uS19</fullName>
    </recommendedName>
    <alternativeName>
        <fullName evidence="2">30S ribosomal protein S19</fullName>
    </alternativeName>
</protein>
<organism>
    <name type="scientific">Salinispora tropica (strain ATCC BAA-916 / DSM 44818 / JCM 13857 / NBRC 105044 / CNB-440)</name>
    <dbReference type="NCBI Taxonomy" id="369723"/>
    <lineage>
        <taxon>Bacteria</taxon>
        <taxon>Bacillati</taxon>
        <taxon>Actinomycetota</taxon>
        <taxon>Actinomycetes</taxon>
        <taxon>Micromonosporales</taxon>
        <taxon>Micromonosporaceae</taxon>
        <taxon>Salinispora</taxon>
    </lineage>
</organism>
<gene>
    <name evidence="1" type="primary">rpsS</name>
    <name type="ordered locus">Strop_3919</name>
</gene>
<keyword id="KW-1185">Reference proteome</keyword>
<keyword id="KW-0687">Ribonucleoprotein</keyword>
<keyword id="KW-0689">Ribosomal protein</keyword>
<keyword id="KW-0694">RNA-binding</keyword>
<keyword id="KW-0699">rRNA-binding</keyword>
<evidence type="ECO:0000255" key="1">
    <source>
        <dbReference type="HAMAP-Rule" id="MF_00531"/>
    </source>
</evidence>
<evidence type="ECO:0000305" key="2"/>